<gene>
    <name type="primary">PAP1</name>
</gene>
<evidence type="ECO:0000250" key="1"/>
<evidence type="ECO:0000255" key="2"/>
<evidence type="ECO:0000269" key="3">
    <source>
    </source>
</evidence>
<evidence type="ECO:0000269" key="4">
    <source>
    </source>
</evidence>
<evidence type="ECO:0000305" key="5"/>
<evidence type="ECO:0007829" key="6">
    <source>
        <dbReference type="PDB" id="1XZW"/>
    </source>
</evidence>
<comment type="catalytic activity">
    <reaction evidence="3">
        <text>a phosphate monoester + H2O = an alcohol + phosphate</text>
        <dbReference type="Rhea" id="RHEA:15017"/>
        <dbReference type="ChEBI" id="CHEBI:15377"/>
        <dbReference type="ChEBI" id="CHEBI:30879"/>
        <dbReference type="ChEBI" id="CHEBI:43474"/>
        <dbReference type="ChEBI" id="CHEBI:67140"/>
        <dbReference type="EC" id="3.1.3.2"/>
    </reaction>
</comment>
<comment type="cofactor">
    <cofactor evidence="1">
        <name>Fe cation</name>
        <dbReference type="ChEBI" id="CHEBI:24875"/>
    </cofactor>
    <text evidence="1">Binds 1 Fe cation per subunit.</text>
</comment>
<comment type="cofactor">
    <cofactor evidence="3">
        <name>Mn(2+)</name>
        <dbReference type="ChEBI" id="CHEBI:29035"/>
    </cofactor>
    <cofactor evidence="3">
        <name>Zn(2+)</name>
        <dbReference type="ChEBI" id="CHEBI:29105"/>
    </cofactor>
    <cofactor evidence="3">
        <name>Cu(2+)</name>
        <dbReference type="ChEBI" id="CHEBI:29036"/>
    </cofactor>
    <cofactor evidence="3">
        <name>Mg(2+)</name>
        <dbReference type="ChEBI" id="CHEBI:18420"/>
    </cofactor>
    <text evidence="3">Binds 1 Mn(2+) ion per subunit. Can also use Zn(2+), Cu(2+) and Mg(2+) ions.</text>
</comment>
<comment type="biophysicochemical properties">
    <absorption>
        <max evidence="3 4">560 nm</max>
    </absorption>
    <kinetics>
        <KM evidence="3 4">95 uM for p-NPP (at pH 4.9 and 25 degrees Celsius)</KM>
        <KM evidence="3 4">120 uM for ATP (at pH 4.9 and 25 degrees Celsius)</KM>
        <KM evidence="3 4">180 uM for ADP (at pH 4.9 and 25 degrees Celsius)</KM>
        <KM evidence="3 4">360 uM for AMP (at pH 4.9 and 25 degrees Celsius)</KM>
        <KM evidence="3 4">75 uM for pyrophosphate (at pH 4.9 and 25 degrees Celsius)</KM>
        <KM evidence="3 4">490 uM for beta-glycerophosphate (at pH 4.9 and 25 degrees Celsius)</KM>
        <KM evidence="3 4">44 uM for 4-nitrophenol phosphate (at pH 3.5)</KM>
        <KM evidence="3 4">68 uM for 4-nitrophenol phosphate (at pH 4)</KM>
        <KM evidence="3 4">68 uM for 4-nitrophenol phosphate (at pH 4.5)</KM>
        <KM evidence="3 4">93 uM for 4-nitrophenol phosphate (at pH 5)</KM>
        <KM evidence="3 4">330 uM for 4-nitrophenol phosphate (at pH 6)</KM>
        <KM evidence="3 4">930 uM for 4-nitrophenol phosphate (at pH 6.5)</KM>
        <KM evidence="3 4">1800 uM for 4-nitrophenol phosphate (at pH 7)</KM>
        <KM evidence="3 4">5000 uM for 4-nitrophenol phosphate (at pH 8)</KM>
    </kinetics>
    <phDependence>
        <text evidence="3 4">Optimum pH is 4.5.</text>
    </phDependence>
</comment>
<comment type="subunit">
    <text evidence="1">Homodimer; disulfide-linked.</text>
</comment>
<comment type="subcellular location">
    <subcellularLocation>
        <location evidence="1">Secreted</location>
    </subcellularLocation>
</comment>
<comment type="similarity">
    <text evidence="5">Belongs to the metallophosphoesterase superfamily. Purple acid phosphatase family.</text>
</comment>
<proteinExistence type="evidence at protein level"/>
<name>PPAF1_IPOBA</name>
<reference key="1">
    <citation type="journal article" date="1999" name="Arch. Biochem. Biophys.">
        <title>Binuclear metal centers in plant purple acid phosphatases: Fe-Mn in sweet potato and Fe-Zn in soybean.</title>
        <authorList>
            <person name="Schenk G."/>
            <person name="Ge Y."/>
            <person name="Carrington L.E."/>
            <person name="Wynne C.J."/>
            <person name="Searle I.R."/>
            <person name="Carroll B.J."/>
            <person name="Hamilton S."/>
            <person name="de Jersey J."/>
        </authorList>
    </citation>
    <scope>NUCLEOTIDE SEQUENCE [MRNA]</scope>
    <scope>CATALYTIC ACTIVITY</scope>
    <scope>COFACTOR</scope>
    <scope>BIOPHYSICOCHEMICAL PROPERTIES</scope>
    <source>
        <strain>cv. Golden</strain>
    </source>
</reference>
<reference key="2">
    <citation type="journal article" date="2005" name="Proc. Natl. Acad. Sci. U.S.A.">
        <title>Phosphate forms an unusual tripodal complex with the Fe-Mn center of sweet potato purple acid phosphatase.</title>
        <authorList>
            <person name="Schenk G."/>
            <person name="Gahan L.R."/>
            <person name="Carrington L.E."/>
            <person name="Mitic N."/>
            <person name="Valizadeh M."/>
            <person name="Hamilton S.E."/>
            <person name="de Jersey J."/>
            <person name="Guddat L.W."/>
        </authorList>
    </citation>
    <scope>X-RAY CRYSTALLOGRAPHY (2.5 ANGSTROMS) OF 39-464 IN COMPLEX WITH SUBSTRATE AND COFACTOR</scope>
    <scope>BIOPHYSICOCHEMICAL PROPERTIES</scope>
</reference>
<keyword id="KW-0002">3D-structure</keyword>
<keyword id="KW-1015">Disulfide bond</keyword>
<keyword id="KW-0325">Glycoprotein</keyword>
<keyword id="KW-0378">Hydrolase</keyword>
<keyword id="KW-0408">Iron</keyword>
<keyword id="KW-0479">Metal-binding</keyword>
<keyword id="KW-0964">Secreted</keyword>
<keyword id="KW-0732">Signal</keyword>
<keyword id="KW-0862">Zinc</keyword>
<feature type="signal peptide" evidence="2">
    <location>
        <begin position="1"/>
        <end position="38"/>
    </location>
</feature>
<feature type="chain" id="PRO_5000057351" description="Purple acid phosphatase 1">
    <location>
        <begin position="39"/>
        <end position="473"/>
    </location>
</feature>
<feature type="active site" description="Proton donor" evidence="1">
    <location>
        <position position="333"/>
    </location>
</feature>
<feature type="binding site" evidence="1">
    <location>
        <position position="172"/>
    </location>
    <ligand>
        <name>Fe cation</name>
        <dbReference type="ChEBI" id="CHEBI:24875"/>
    </ligand>
</feature>
<feature type="binding site" evidence="1">
    <location>
        <position position="201"/>
    </location>
    <ligand>
        <name>Fe cation</name>
        <dbReference type="ChEBI" id="CHEBI:24875"/>
    </ligand>
</feature>
<feature type="binding site">
    <location>
        <position position="201"/>
    </location>
    <ligand>
        <name>Mn(2+)</name>
        <dbReference type="ChEBI" id="CHEBI:29035"/>
    </ligand>
</feature>
<feature type="binding site" evidence="1">
    <location>
        <position position="204"/>
    </location>
    <ligand>
        <name>Fe cation</name>
        <dbReference type="ChEBI" id="CHEBI:24875"/>
    </ligand>
</feature>
<feature type="binding site">
    <location>
        <position position="238"/>
    </location>
    <ligand>
        <name>Mn(2+)</name>
        <dbReference type="ChEBI" id="CHEBI:29035"/>
    </ligand>
</feature>
<feature type="binding site" evidence="1">
    <location>
        <position position="238"/>
    </location>
    <ligand>
        <name>substrate</name>
    </ligand>
</feature>
<feature type="binding site">
    <location>
        <position position="323"/>
    </location>
    <ligand>
        <name>Mn(2+)</name>
        <dbReference type="ChEBI" id="CHEBI:29035"/>
    </ligand>
</feature>
<feature type="binding site" evidence="1">
    <location>
        <begin position="360"/>
        <end position="362"/>
    </location>
    <ligand>
        <name>substrate</name>
    </ligand>
</feature>
<feature type="binding site">
    <location>
        <position position="360"/>
    </location>
    <ligand>
        <name>Mn(2+)</name>
        <dbReference type="ChEBI" id="CHEBI:29035"/>
    </ligand>
</feature>
<feature type="binding site" evidence="1">
    <location>
        <position position="362"/>
    </location>
    <ligand>
        <name>Fe cation</name>
        <dbReference type="ChEBI" id="CHEBI:24875"/>
    </ligand>
</feature>
<feature type="glycosylation site" description="N-linked (GlcNAc...) asparagine" evidence="2">
    <location>
        <position position="118"/>
    </location>
</feature>
<feature type="glycosylation site" description="N-linked (GlcNAc...) asparagine" evidence="2">
    <location>
        <position position="180"/>
    </location>
</feature>
<feature type="glycosylation site" description="N-linked (GlcNAc...) asparagine" evidence="2">
    <location>
        <position position="311"/>
    </location>
</feature>
<feature type="glycosylation site" description="N-linked (GlcNAc...) asparagine" evidence="2">
    <location>
        <position position="433"/>
    </location>
</feature>
<feature type="disulfide bond" description="Interchain" evidence="1">
    <location>
        <position position="382"/>
    </location>
</feature>
<feature type="helix" evidence="6">
    <location>
        <begin position="42"/>
        <end position="45"/>
    </location>
</feature>
<feature type="helix" evidence="6">
    <location>
        <begin position="52"/>
        <end position="54"/>
    </location>
</feature>
<feature type="strand" evidence="6">
    <location>
        <begin position="64"/>
        <end position="70"/>
    </location>
</feature>
<feature type="strand" evidence="6">
    <location>
        <begin position="72"/>
        <end position="76"/>
    </location>
</feature>
<feature type="strand" evidence="6">
    <location>
        <begin position="78"/>
        <end position="86"/>
    </location>
</feature>
<feature type="turn" evidence="6">
    <location>
        <begin position="89"/>
        <end position="92"/>
    </location>
</feature>
<feature type="strand" evidence="6">
    <location>
        <begin position="93"/>
        <end position="98"/>
    </location>
</feature>
<feature type="strand" evidence="6">
    <location>
        <begin position="105"/>
        <end position="108"/>
    </location>
</feature>
<feature type="strand" evidence="6">
    <location>
        <begin position="110"/>
        <end position="112"/>
    </location>
</feature>
<feature type="strand" evidence="6">
    <location>
        <begin position="123"/>
        <end position="129"/>
    </location>
</feature>
<feature type="strand" evidence="6">
    <location>
        <begin position="137"/>
        <end position="142"/>
    </location>
</feature>
<feature type="helix" evidence="6">
    <location>
        <begin position="145"/>
        <end position="147"/>
    </location>
</feature>
<feature type="strand" evidence="6">
    <location>
        <begin position="149"/>
        <end position="154"/>
    </location>
</feature>
<feature type="strand" evidence="6">
    <location>
        <begin position="165"/>
        <end position="170"/>
    </location>
</feature>
<feature type="helix" evidence="6">
    <location>
        <begin position="177"/>
        <end position="188"/>
    </location>
</feature>
<feature type="strand" evidence="6">
    <location>
        <begin position="194"/>
        <end position="198"/>
    </location>
</feature>
<feature type="helix" evidence="6">
    <location>
        <begin position="205"/>
        <end position="207"/>
    </location>
</feature>
<feature type="helix" evidence="6">
    <location>
        <begin position="209"/>
        <end position="211"/>
    </location>
</feature>
<feature type="helix" evidence="6">
    <location>
        <begin position="214"/>
        <end position="227"/>
    </location>
</feature>
<feature type="helix" evidence="6">
    <location>
        <begin position="238"/>
        <end position="240"/>
    </location>
</feature>
<feature type="helix" evidence="6">
    <location>
        <begin position="245"/>
        <end position="247"/>
    </location>
</feature>
<feature type="helix" evidence="6">
    <location>
        <begin position="254"/>
        <end position="259"/>
    </location>
</feature>
<feature type="helix" evidence="6">
    <location>
        <begin position="265"/>
        <end position="267"/>
    </location>
</feature>
<feature type="strand" evidence="6">
    <location>
        <begin position="274"/>
        <end position="279"/>
    </location>
</feature>
<feature type="strand" evidence="6">
    <location>
        <begin position="282"/>
        <end position="286"/>
    </location>
</feature>
<feature type="helix" evidence="6">
    <location>
        <begin position="298"/>
        <end position="309"/>
    </location>
</feature>
<feature type="turn" evidence="6">
    <location>
        <begin position="312"/>
        <end position="314"/>
    </location>
</feature>
<feature type="strand" evidence="6">
    <location>
        <begin position="317"/>
        <end position="321"/>
    </location>
</feature>
<feature type="turn" evidence="6">
    <location>
        <begin position="332"/>
        <end position="337"/>
    </location>
</feature>
<feature type="helix" evidence="6">
    <location>
        <begin position="338"/>
        <end position="350"/>
    </location>
</feature>
<feature type="strand" evidence="6">
    <location>
        <begin position="354"/>
        <end position="358"/>
    </location>
</feature>
<feature type="strand" evidence="6">
    <location>
        <begin position="360"/>
        <end position="367"/>
    </location>
</feature>
<feature type="strand" evidence="6">
    <location>
        <begin position="369"/>
        <end position="371"/>
    </location>
</feature>
<feature type="strand" evidence="6">
    <location>
        <begin position="392"/>
        <end position="396"/>
    </location>
</feature>
<feature type="strand" evidence="6">
    <location>
        <begin position="417"/>
        <end position="421"/>
    </location>
</feature>
<feature type="strand" evidence="6">
    <location>
        <begin position="425"/>
        <end position="431"/>
    </location>
</feature>
<feature type="strand" evidence="6">
    <location>
        <begin position="433"/>
        <end position="443"/>
    </location>
</feature>
<feature type="strand" evidence="6">
    <location>
        <begin position="452"/>
        <end position="458"/>
    </location>
</feature>
<dbReference type="EC" id="3.1.3.2"/>
<dbReference type="EMBL" id="AF200825">
    <property type="protein sequence ID" value="AAF19821.1"/>
    <property type="molecule type" value="mRNA"/>
</dbReference>
<dbReference type="PIR" id="A59200">
    <property type="entry name" value="A59200"/>
</dbReference>
<dbReference type="PDB" id="1XZW">
    <property type="method" value="X-ray"/>
    <property type="resolution" value="2.50 A"/>
    <property type="chains" value="A/B=39-464"/>
</dbReference>
<dbReference type="PDBsum" id="1XZW"/>
<dbReference type="SMR" id="Q9SE00"/>
<dbReference type="GlyCosmos" id="Q9SE00">
    <property type="glycosylation" value="4 sites, No reported glycans"/>
</dbReference>
<dbReference type="BioCyc" id="MetaCyc:MONOMER-15153"/>
<dbReference type="BRENDA" id="3.1.3.2">
    <property type="organism ID" value="2773"/>
</dbReference>
<dbReference type="SABIO-RK" id="Q9SE00"/>
<dbReference type="EvolutionaryTrace" id="Q9SE00"/>
<dbReference type="GO" id="GO:0005576">
    <property type="term" value="C:extracellular region"/>
    <property type="evidence" value="ECO:0007669"/>
    <property type="project" value="UniProtKB-SubCell"/>
</dbReference>
<dbReference type="GO" id="GO:0003993">
    <property type="term" value="F:acid phosphatase activity"/>
    <property type="evidence" value="ECO:0007669"/>
    <property type="project" value="UniProtKB-EC"/>
</dbReference>
<dbReference type="GO" id="GO:0046872">
    <property type="term" value="F:metal ion binding"/>
    <property type="evidence" value="ECO:0007669"/>
    <property type="project" value="UniProtKB-KW"/>
</dbReference>
<dbReference type="CDD" id="cd00839">
    <property type="entry name" value="MPP_PAPs"/>
    <property type="match status" value="1"/>
</dbReference>
<dbReference type="FunFam" id="2.60.40.380:FF:000001">
    <property type="entry name" value="Fe(3+)-Zn(2+) purple acid phosphatase"/>
    <property type="match status" value="1"/>
</dbReference>
<dbReference type="FunFam" id="3.60.21.10:FF:000034">
    <property type="entry name" value="Fe(3+)-Zn(2+) purple acid phosphatase"/>
    <property type="match status" value="1"/>
</dbReference>
<dbReference type="Gene3D" id="3.60.21.10">
    <property type="match status" value="1"/>
</dbReference>
<dbReference type="Gene3D" id="2.60.40.380">
    <property type="entry name" value="Purple acid phosphatase-like, N-terminal"/>
    <property type="match status" value="1"/>
</dbReference>
<dbReference type="InterPro" id="IPR004843">
    <property type="entry name" value="Calcineurin-like_PHP_ApaH"/>
</dbReference>
<dbReference type="InterPro" id="IPR029052">
    <property type="entry name" value="Metallo-depent_PP-like"/>
</dbReference>
<dbReference type="InterPro" id="IPR041792">
    <property type="entry name" value="MPP_PAP"/>
</dbReference>
<dbReference type="InterPro" id="IPR039331">
    <property type="entry name" value="PPA-like"/>
</dbReference>
<dbReference type="InterPro" id="IPR008963">
    <property type="entry name" value="Purple_acid_Pase-like_N"/>
</dbReference>
<dbReference type="InterPro" id="IPR015914">
    <property type="entry name" value="Purple_acid_Pase_N"/>
</dbReference>
<dbReference type="InterPro" id="IPR025733">
    <property type="entry name" value="Purple_acid_PPase_C_dom"/>
</dbReference>
<dbReference type="PANTHER" id="PTHR22953">
    <property type="entry name" value="ACID PHOSPHATASE RELATED"/>
    <property type="match status" value="1"/>
</dbReference>
<dbReference type="PANTHER" id="PTHR22953:SF35">
    <property type="entry name" value="FE(3+)-ZN(2+) PURPLE ACID PHOSPHATASE 12"/>
    <property type="match status" value="1"/>
</dbReference>
<dbReference type="Pfam" id="PF00149">
    <property type="entry name" value="Metallophos"/>
    <property type="match status" value="1"/>
</dbReference>
<dbReference type="Pfam" id="PF14008">
    <property type="entry name" value="Metallophos_C"/>
    <property type="match status" value="1"/>
</dbReference>
<dbReference type="Pfam" id="PF16656">
    <property type="entry name" value="Pur_ac_phosph_N"/>
    <property type="match status" value="1"/>
</dbReference>
<dbReference type="SUPFAM" id="SSF56300">
    <property type="entry name" value="Metallo-dependent phosphatases"/>
    <property type="match status" value="1"/>
</dbReference>
<dbReference type="SUPFAM" id="SSF49363">
    <property type="entry name" value="Purple acid phosphatase, N-terminal domain"/>
    <property type="match status" value="1"/>
</dbReference>
<accession>Q9SE00</accession>
<organism>
    <name type="scientific">Ipomoea batatas</name>
    <name type="common">Sweet potato</name>
    <name type="synonym">Convolvulus batatas</name>
    <dbReference type="NCBI Taxonomy" id="4120"/>
    <lineage>
        <taxon>Eukaryota</taxon>
        <taxon>Viridiplantae</taxon>
        <taxon>Streptophyta</taxon>
        <taxon>Embryophyta</taxon>
        <taxon>Tracheophyta</taxon>
        <taxon>Spermatophyta</taxon>
        <taxon>Magnoliopsida</taxon>
        <taxon>eudicotyledons</taxon>
        <taxon>Gunneridae</taxon>
        <taxon>Pentapetalae</taxon>
        <taxon>asterids</taxon>
        <taxon>lamiids</taxon>
        <taxon>Solanales</taxon>
        <taxon>Convolvulaceae</taxon>
        <taxon>Ipomoeeae</taxon>
        <taxon>Ipomoea</taxon>
    </lineage>
</organism>
<protein>
    <recommendedName>
        <fullName>Purple acid phosphatase 1</fullName>
        <ecNumber>3.1.3.2</ecNumber>
    </recommendedName>
    <alternativeName>
        <fullName>Manganese(II) purple acid phosphatase 1</fullName>
    </alternativeName>
</protein>
<sequence length="473" mass="53815">MRLVVVGLWCLILGLILNPTKFCDAGVTSSYVRKSLSALPNAEDVDMPWDSDVFAVPSGYNAPQQVHITQGDYEGRGVIISWTTPYDKAGANKVVYWSENSKSQKRAMGTVVTYKYYNYTSAFIHHCTIKDLEYDTKYYYRLGFGDAKRQFWFVTPPKPGPDVPYVFGLIGDIGQTHDSNTTLTHYEQNSAKGQAVLFMGDLSYSNRWPNHDNNRWDTWGRFSERSVAYQPWIWTAGNHEIDYAPDIGEYQPFVPFTNRYPTPHEASGSGDPLWYAIKRASAHIIVLSSYSGFVKYSPQYKWFTSELEKVNRSETPWLIVLVHAPLYNSYEAHYMEGEAMRAIFEPYFVYYKVDIVFSGHVHSYERSERVSNVAYNIVNAKCTPVSDESAPVYITIGDGGNSEGLASEMTQPQPSYSAFREASFGHGIFDIKNRTHAHFSWHRNQDGASVEADSLWLLNRYWASEDASSMSAM</sequence>